<organism>
    <name type="scientific">Haemophilus influenzae (strain 86-028NP)</name>
    <dbReference type="NCBI Taxonomy" id="281310"/>
    <lineage>
        <taxon>Bacteria</taxon>
        <taxon>Pseudomonadati</taxon>
        <taxon>Pseudomonadota</taxon>
        <taxon>Gammaproteobacteria</taxon>
        <taxon>Pasteurellales</taxon>
        <taxon>Pasteurellaceae</taxon>
        <taxon>Haemophilus</taxon>
    </lineage>
</organism>
<protein>
    <recommendedName>
        <fullName evidence="1">Integration host factor subunit beta</fullName>
        <shortName evidence="1">IHF-beta</shortName>
    </recommendedName>
</protein>
<sequence length="94" mass="10502">MTKSELMEKLSAKQPTLSAKEIENMVKDILEFISQSLENGDRVEVRGFGSFSLHHRQPRLGRNPKTGDSVNLSAKSVPYFKAGKELKARVDVQA</sequence>
<reference key="1">
    <citation type="journal article" date="2005" name="J. Bacteriol.">
        <title>Genomic sequence of an otitis media isolate of nontypeable Haemophilus influenzae: comparative study with H. influenzae serotype d, strain KW20.</title>
        <authorList>
            <person name="Harrison A."/>
            <person name="Dyer D.W."/>
            <person name="Gillaspy A."/>
            <person name="Ray W.C."/>
            <person name="Mungur R."/>
            <person name="Carson M.B."/>
            <person name="Zhong H."/>
            <person name="Gipson J."/>
            <person name="Gipson M."/>
            <person name="Johnson L.S."/>
            <person name="Lewis L."/>
            <person name="Bakaletz L.O."/>
            <person name="Munson R.S. Jr."/>
        </authorList>
    </citation>
    <scope>NUCLEOTIDE SEQUENCE [LARGE SCALE GENOMIC DNA]</scope>
    <source>
        <strain>86-028NP</strain>
    </source>
</reference>
<accession>Q4QJU8</accession>
<evidence type="ECO:0000255" key="1">
    <source>
        <dbReference type="HAMAP-Rule" id="MF_00381"/>
    </source>
</evidence>
<feature type="chain" id="PRO_1000060605" description="Integration host factor subunit beta">
    <location>
        <begin position="1"/>
        <end position="94"/>
    </location>
</feature>
<name>IHFB_HAEI8</name>
<keyword id="KW-0233">DNA recombination</keyword>
<keyword id="KW-0238">DNA-binding</keyword>
<keyword id="KW-0804">Transcription</keyword>
<keyword id="KW-0805">Transcription regulation</keyword>
<keyword id="KW-0810">Translation regulation</keyword>
<gene>
    <name evidence="1" type="primary">ihfB</name>
    <name evidence="1" type="synonym">himD</name>
    <name type="ordered locus">NTHI1947</name>
</gene>
<dbReference type="EMBL" id="CP000057">
    <property type="protein sequence ID" value="AAX88699.1"/>
    <property type="molecule type" value="Genomic_DNA"/>
</dbReference>
<dbReference type="RefSeq" id="WP_011272718.1">
    <property type="nucleotide sequence ID" value="NC_007146.2"/>
</dbReference>
<dbReference type="SMR" id="Q4QJU8"/>
<dbReference type="KEGG" id="hit:NTHI1947"/>
<dbReference type="HOGENOM" id="CLU_105066_2_0_6"/>
<dbReference type="Proteomes" id="UP000002525">
    <property type="component" value="Chromosome"/>
</dbReference>
<dbReference type="GO" id="GO:0005694">
    <property type="term" value="C:chromosome"/>
    <property type="evidence" value="ECO:0007669"/>
    <property type="project" value="InterPro"/>
</dbReference>
<dbReference type="GO" id="GO:0005829">
    <property type="term" value="C:cytosol"/>
    <property type="evidence" value="ECO:0007669"/>
    <property type="project" value="TreeGrafter"/>
</dbReference>
<dbReference type="GO" id="GO:0003677">
    <property type="term" value="F:DNA binding"/>
    <property type="evidence" value="ECO:0007669"/>
    <property type="project" value="UniProtKB-UniRule"/>
</dbReference>
<dbReference type="GO" id="GO:0030527">
    <property type="term" value="F:structural constituent of chromatin"/>
    <property type="evidence" value="ECO:0007669"/>
    <property type="project" value="InterPro"/>
</dbReference>
<dbReference type="GO" id="GO:0006310">
    <property type="term" value="P:DNA recombination"/>
    <property type="evidence" value="ECO:0007669"/>
    <property type="project" value="UniProtKB-UniRule"/>
</dbReference>
<dbReference type="GO" id="GO:0006355">
    <property type="term" value="P:regulation of DNA-templated transcription"/>
    <property type="evidence" value="ECO:0007669"/>
    <property type="project" value="UniProtKB-UniRule"/>
</dbReference>
<dbReference type="GO" id="GO:0006417">
    <property type="term" value="P:regulation of translation"/>
    <property type="evidence" value="ECO:0007669"/>
    <property type="project" value="UniProtKB-UniRule"/>
</dbReference>
<dbReference type="CDD" id="cd13836">
    <property type="entry name" value="IHF_B"/>
    <property type="match status" value="1"/>
</dbReference>
<dbReference type="FunFam" id="4.10.520.10:FF:000003">
    <property type="entry name" value="Integration host factor subunit beta"/>
    <property type="match status" value="1"/>
</dbReference>
<dbReference type="Gene3D" id="4.10.520.10">
    <property type="entry name" value="IHF-like DNA-binding proteins"/>
    <property type="match status" value="1"/>
</dbReference>
<dbReference type="HAMAP" id="MF_00381">
    <property type="entry name" value="IHF_beta"/>
    <property type="match status" value="1"/>
</dbReference>
<dbReference type="InterPro" id="IPR000119">
    <property type="entry name" value="Hist_DNA-bd"/>
</dbReference>
<dbReference type="InterPro" id="IPR020816">
    <property type="entry name" value="Histone-like_DNA-bd_CS"/>
</dbReference>
<dbReference type="InterPro" id="IPR010992">
    <property type="entry name" value="IHF-like_DNA-bd_dom_sf"/>
</dbReference>
<dbReference type="InterPro" id="IPR005685">
    <property type="entry name" value="IHF_beta"/>
</dbReference>
<dbReference type="NCBIfam" id="TIGR00988">
    <property type="entry name" value="hip"/>
    <property type="match status" value="1"/>
</dbReference>
<dbReference type="NCBIfam" id="NF001222">
    <property type="entry name" value="PRK00199.1"/>
    <property type="match status" value="1"/>
</dbReference>
<dbReference type="PANTHER" id="PTHR33175">
    <property type="entry name" value="DNA-BINDING PROTEIN HU"/>
    <property type="match status" value="1"/>
</dbReference>
<dbReference type="PANTHER" id="PTHR33175:SF5">
    <property type="entry name" value="INTEGRATION HOST FACTOR SUBUNIT BETA"/>
    <property type="match status" value="1"/>
</dbReference>
<dbReference type="Pfam" id="PF00216">
    <property type="entry name" value="Bac_DNA_binding"/>
    <property type="match status" value="1"/>
</dbReference>
<dbReference type="PRINTS" id="PR01727">
    <property type="entry name" value="DNABINDINGHU"/>
</dbReference>
<dbReference type="SMART" id="SM00411">
    <property type="entry name" value="BHL"/>
    <property type="match status" value="1"/>
</dbReference>
<dbReference type="SUPFAM" id="SSF47729">
    <property type="entry name" value="IHF-like DNA-binding proteins"/>
    <property type="match status" value="1"/>
</dbReference>
<dbReference type="PROSITE" id="PS00045">
    <property type="entry name" value="HISTONE_LIKE"/>
    <property type="match status" value="1"/>
</dbReference>
<comment type="function">
    <text evidence="1">This protein is one of the two subunits of integration host factor, a specific DNA-binding protein that functions in genetic recombination as well as in transcriptional and translational control.</text>
</comment>
<comment type="subunit">
    <text evidence="1">Heterodimer of an alpha and a beta chain.</text>
</comment>
<comment type="similarity">
    <text evidence="1">Belongs to the bacterial histone-like protein family.</text>
</comment>
<proteinExistence type="inferred from homology"/>